<gene>
    <name evidence="6" type="primary">SMO1-3</name>
    <name evidence="8" type="ordered locus">At4g22755</name>
    <name evidence="9" type="ORF">T12H17.140</name>
</gene>
<dbReference type="EC" id="1.14.18.11" evidence="2"/>
<dbReference type="EC" id="1.14.18.9" evidence="2"/>
<dbReference type="EMBL" id="AL021635">
    <property type="status" value="NOT_ANNOTATED_CDS"/>
    <property type="molecule type" value="Genomic_DNA"/>
</dbReference>
<dbReference type="EMBL" id="CP002687">
    <property type="protein sequence ID" value="ANM66182.1"/>
    <property type="molecule type" value="Genomic_DNA"/>
</dbReference>
<dbReference type="EMBL" id="AY323213">
    <property type="protein sequence ID" value="AAQ94118.1"/>
    <property type="molecule type" value="mRNA"/>
</dbReference>
<dbReference type="RefSeq" id="NP_567669.1">
    <property type="nucleotide sequence ID" value="NM_118403.2"/>
</dbReference>
<dbReference type="FunCoup" id="F4JLZ6">
    <property type="interactions" value="483"/>
</dbReference>
<dbReference type="STRING" id="3702.F4JLZ6"/>
<dbReference type="PaxDb" id="3702-AT4G22753.2"/>
<dbReference type="EnsemblPlants" id="AT4G22755.1">
    <property type="protein sequence ID" value="AT4G22755.1"/>
    <property type="gene ID" value="AT4G22755"/>
</dbReference>
<dbReference type="GeneID" id="28720173"/>
<dbReference type="Gramene" id="AT4G22755.1">
    <property type="protein sequence ID" value="AT4G22755.1"/>
    <property type="gene ID" value="AT4G22755"/>
</dbReference>
<dbReference type="KEGG" id="ath:AT4G22755"/>
<dbReference type="Araport" id="AT4G22755"/>
<dbReference type="TAIR" id="AT4G22755">
    <property type="gene designation" value="SMO1-3"/>
</dbReference>
<dbReference type="eggNOG" id="KOG0873">
    <property type="taxonomic scope" value="Eukaryota"/>
</dbReference>
<dbReference type="eggNOG" id="KOG1315">
    <property type="taxonomic scope" value="Eukaryota"/>
</dbReference>
<dbReference type="HOGENOM" id="CLU_047036_5_3_1"/>
<dbReference type="InParanoid" id="F4JLZ6"/>
<dbReference type="OMA" id="VRCYRDV"/>
<dbReference type="OrthoDB" id="1658724at2759"/>
<dbReference type="BioCyc" id="ARA:AT4G22755-MONOMER"/>
<dbReference type="BioCyc" id="MetaCyc:GQT-5411-MONOMER"/>
<dbReference type="BRENDA" id="1.14.18.10">
    <property type="organism ID" value="399"/>
</dbReference>
<dbReference type="PRO" id="PR:F4JLZ6"/>
<dbReference type="Proteomes" id="UP000006548">
    <property type="component" value="Chromosome 4"/>
</dbReference>
<dbReference type="ExpressionAtlas" id="F4JLZ6">
    <property type="expression patterns" value="baseline and differential"/>
</dbReference>
<dbReference type="GO" id="GO:0005783">
    <property type="term" value="C:endoplasmic reticulum"/>
    <property type="evidence" value="ECO:0000314"/>
    <property type="project" value="UniProtKB"/>
</dbReference>
<dbReference type="GO" id="GO:0005789">
    <property type="term" value="C:endoplasmic reticulum membrane"/>
    <property type="evidence" value="ECO:0007669"/>
    <property type="project" value="UniProtKB-SubCell"/>
</dbReference>
<dbReference type="GO" id="GO:0000254">
    <property type="term" value="F:C-4 methylsterol oxidase activity"/>
    <property type="evidence" value="ECO:0007669"/>
    <property type="project" value="UniProtKB-EC"/>
</dbReference>
<dbReference type="GO" id="GO:0005506">
    <property type="term" value="F:iron ion binding"/>
    <property type="evidence" value="ECO:0007669"/>
    <property type="project" value="InterPro"/>
</dbReference>
<dbReference type="GO" id="GO:0016126">
    <property type="term" value="P:sterol biosynthetic process"/>
    <property type="evidence" value="ECO:0007669"/>
    <property type="project" value="UniProtKB-KW"/>
</dbReference>
<dbReference type="InterPro" id="IPR006694">
    <property type="entry name" value="Fatty_acid_hydroxylase"/>
</dbReference>
<dbReference type="InterPro" id="IPR050307">
    <property type="entry name" value="Sterol_Desaturase_Related"/>
</dbReference>
<dbReference type="PANTHER" id="PTHR11863">
    <property type="entry name" value="STEROL DESATURASE"/>
    <property type="match status" value="1"/>
</dbReference>
<dbReference type="Pfam" id="PF04116">
    <property type="entry name" value="FA_hydroxylase"/>
    <property type="match status" value="1"/>
</dbReference>
<organism>
    <name type="scientific">Arabidopsis thaliana</name>
    <name type="common">Mouse-ear cress</name>
    <dbReference type="NCBI Taxonomy" id="3702"/>
    <lineage>
        <taxon>Eukaryota</taxon>
        <taxon>Viridiplantae</taxon>
        <taxon>Streptophyta</taxon>
        <taxon>Embryophyta</taxon>
        <taxon>Tracheophyta</taxon>
        <taxon>Spermatophyta</taxon>
        <taxon>Magnoliopsida</taxon>
        <taxon>eudicotyledons</taxon>
        <taxon>Gunneridae</taxon>
        <taxon>Pentapetalae</taxon>
        <taxon>rosids</taxon>
        <taxon>malvids</taxon>
        <taxon>Brassicales</taxon>
        <taxon>Brassicaceae</taxon>
        <taxon>Camelineae</taxon>
        <taxon>Arabidopsis</taxon>
    </lineage>
</organism>
<protein>
    <recommendedName>
        <fullName evidence="6">Methylsterol monooxygenase 1-3</fullName>
        <ecNumber evidence="2">1.14.18.11</ecNumber>
        <ecNumber evidence="2">1.14.18.9</ecNumber>
    </recommendedName>
    <alternativeName>
        <fullName evidence="6">Sterol 4-alpha-methyl-oxidase 1-3</fullName>
        <shortName evidence="6">AtSMO1-3</shortName>
    </alternativeName>
</protein>
<proteinExistence type="evidence at protein level"/>
<reference key="1">
    <citation type="journal article" date="1999" name="Nature">
        <title>Sequence and analysis of chromosome 4 of the plant Arabidopsis thaliana.</title>
        <authorList>
            <person name="Mayer K.F.X."/>
            <person name="Schueller C."/>
            <person name="Wambutt R."/>
            <person name="Murphy G."/>
            <person name="Volckaert G."/>
            <person name="Pohl T."/>
            <person name="Duesterhoeft A."/>
            <person name="Stiekema W."/>
            <person name="Entian K.-D."/>
            <person name="Terryn N."/>
            <person name="Harris B."/>
            <person name="Ansorge W."/>
            <person name="Brandt P."/>
            <person name="Grivell L.A."/>
            <person name="Rieger M."/>
            <person name="Weichselgartner M."/>
            <person name="de Simone V."/>
            <person name="Obermaier B."/>
            <person name="Mache R."/>
            <person name="Mueller M."/>
            <person name="Kreis M."/>
            <person name="Delseny M."/>
            <person name="Puigdomenech P."/>
            <person name="Watson M."/>
            <person name="Schmidtheini T."/>
            <person name="Reichert B."/>
            <person name="Portetelle D."/>
            <person name="Perez-Alonso M."/>
            <person name="Boutry M."/>
            <person name="Bancroft I."/>
            <person name="Vos P."/>
            <person name="Hoheisel J."/>
            <person name="Zimmermann W."/>
            <person name="Wedler H."/>
            <person name="Ridley P."/>
            <person name="Langham S.-A."/>
            <person name="McCullagh B."/>
            <person name="Bilham L."/>
            <person name="Robben J."/>
            <person name="van der Schueren J."/>
            <person name="Grymonprez B."/>
            <person name="Chuang Y.-J."/>
            <person name="Vandenbussche F."/>
            <person name="Braeken M."/>
            <person name="Weltjens I."/>
            <person name="Voet M."/>
            <person name="Bastiaens I."/>
            <person name="Aert R."/>
            <person name="Defoor E."/>
            <person name="Weitzenegger T."/>
            <person name="Bothe G."/>
            <person name="Ramsperger U."/>
            <person name="Hilbert H."/>
            <person name="Braun M."/>
            <person name="Holzer E."/>
            <person name="Brandt A."/>
            <person name="Peters S."/>
            <person name="van Staveren M."/>
            <person name="Dirkse W."/>
            <person name="Mooijman P."/>
            <person name="Klein Lankhorst R."/>
            <person name="Rose M."/>
            <person name="Hauf J."/>
            <person name="Koetter P."/>
            <person name="Berneiser S."/>
            <person name="Hempel S."/>
            <person name="Feldpausch M."/>
            <person name="Lamberth S."/>
            <person name="Van den Daele H."/>
            <person name="De Keyser A."/>
            <person name="Buysshaert C."/>
            <person name="Gielen J."/>
            <person name="Villarroel R."/>
            <person name="De Clercq R."/>
            <person name="van Montagu M."/>
            <person name="Rogers J."/>
            <person name="Cronin A."/>
            <person name="Quail M.A."/>
            <person name="Bray-Allen S."/>
            <person name="Clark L."/>
            <person name="Doggett J."/>
            <person name="Hall S."/>
            <person name="Kay M."/>
            <person name="Lennard N."/>
            <person name="McLay K."/>
            <person name="Mayes R."/>
            <person name="Pettett A."/>
            <person name="Rajandream M.A."/>
            <person name="Lyne M."/>
            <person name="Benes V."/>
            <person name="Rechmann S."/>
            <person name="Borkova D."/>
            <person name="Bloecker H."/>
            <person name="Scharfe M."/>
            <person name="Grimm M."/>
            <person name="Loehnert T.-H."/>
            <person name="Dose S."/>
            <person name="de Haan M."/>
            <person name="Maarse A.C."/>
            <person name="Schaefer M."/>
            <person name="Mueller-Auer S."/>
            <person name="Gabel C."/>
            <person name="Fuchs M."/>
            <person name="Fartmann B."/>
            <person name="Granderath K."/>
            <person name="Dauner D."/>
            <person name="Herzl A."/>
            <person name="Neumann S."/>
            <person name="Argiriou A."/>
            <person name="Vitale D."/>
            <person name="Liguori R."/>
            <person name="Piravandi E."/>
            <person name="Massenet O."/>
            <person name="Quigley F."/>
            <person name="Clabauld G."/>
            <person name="Muendlein A."/>
            <person name="Felber R."/>
            <person name="Schnabl S."/>
            <person name="Hiller R."/>
            <person name="Schmidt W."/>
            <person name="Lecharny A."/>
            <person name="Aubourg S."/>
            <person name="Chefdor F."/>
            <person name="Cooke R."/>
            <person name="Berger C."/>
            <person name="Monfort A."/>
            <person name="Casacuberta E."/>
            <person name="Gibbons T."/>
            <person name="Weber N."/>
            <person name="Vandenbol M."/>
            <person name="Bargues M."/>
            <person name="Terol J."/>
            <person name="Torres A."/>
            <person name="Perez-Perez A."/>
            <person name="Purnelle B."/>
            <person name="Bent E."/>
            <person name="Johnson S."/>
            <person name="Tacon D."/>
            <person name="Jesse T."/>
            <person name="Heijnen L."/>
            <person name="Schwarz S."/>
            <person name="Scholler P."/>
            <person name="Heber S."/>
            <person name="Francs P."/>
            <person name="Bielke C."/>
            <person name="Frishman D."/>
            <person name="Haase D."/>
            <person name="Lemcke K."/>
            <person name="Mewes H.-W."/>
            <person name="Stocker S."/>
            <person name="Zaccaria P."/>
            <person name="Bevan M."/>
            <person name="Wilson R.K."/>
            <person name="de la Bastide M."/>
            <person name="Habermann K."/>
            <person name="Parnell L."/>
            <person name="Dedhia N."/>
            <person name="Gnoj L."/>
            <person name="Schutz K."/>
            <person name="Huang E."/>
            <person name="Spiegel L."/>
            <person name="Sekhon M."/>
            <person name="Murray J."/>
            <person name="Sheet P."/>
            <person name="Cordes M."/>
            <person name="Abu-Threideh J."/>
            <person name="Stoneking T."/>
            <person name="Kalicki J."/>
            <person name="Graves T."/>
            <person name="Harmon G."/>
            <person name="Edwards J."/>
            <person name="Latreille P."/>
            <person name="Courtney L."/>
            <person name="Cloud J."/>
            <person name="Abbott A."/>
            <person name="Scott K."/>
            <person name="Johnson D."/>
            <person name="Minx P."/>
            <person name="Bentley D."/>
            <person name="Fulton B."/>
            <person name="Miller N."/>
            <person name="Greco T."/>
            <person name="Kemp K."/>
            <person name="Kramer J."/>
            <person name="Fulton L."/>
            <person name="Mardis E."/>
            <person name="Dante M."/>
            <person name="Pepin K."/>
            <person name="Hillier L.W."/>
            <person name="Nelson J."/>
            <person name="Spieth J."/>
            <person name="Ryan E."/>
            <person name="Andrews S."/>
            <person name="Geisel C."/>
            <person name="Layman D."/>
            <person name="Du H."/>
            <person name="Ali J."/>
            <person name="Berghoff A."/>
            <person name="Jones K."/>
            <person name="Drone K."/>
            <person name="Cotton M."/>
            <person name="Joshu C."/>
            <person name="Antonoiu B."/>
            <person name="Zidanic M."/>
            <person name="Strong C."/>
            <person name="Sun H."/>
            <person name="Lamar B."/>
            <person name="Yordan C."/>
            <person name="Ma P."/>
            <person name="Zhong J."/>
            <person name="Preston R."/>
            <person name="Vil D."/>
            <person name="Shekher M."/>
            <person name="Matero A."/>
            <person name="Shah R."/>
            <person name="Swaby I.K."/>
            <person name="O'Shaughnessy A."/>
            <person name="Rodriguez M."/>
            <person name="Hoffman J."/>
            <person name="Till S."/>
            <person name="Granat S."/>
            <person name="Shohdy N."/>
            <person name="Hasegawa A."/>
            <person name="Hameed A."/>
            <person name="Lodhi M."/>
            <person name="Johnson A."/>
            <person name="Chen E."/>
            <person name="Marra M.A."/>
            <person name="Martienssen R."/>
            <person name="McCombie W.R."/>
        </authorList>
    </citation>
    <scope>NUCLEOTIDE SEQUENCE [LARGE SCALE GENOMIC DNA]</scope>
    <source>
        <strain>cv. Columbia</strain>
    </source>
</reference>
<reference key="2">
    <citation type="journal article" date="2017" name="Plant J.">
        <title>Araport11: a complete reannotation of the Arabidopsis thaliana reference genome.</title>
        <authorList>
            <person name="Cheng C.Y."/>
            <person name="Krishnakumar V."/>
            <person name="Chan A.P."/>
            <person name="Thibaud-Nissen F."/>
            <person name="Schobel S."/>
            <person name="Town C.D."/>
        </authorList>
    </citation>
    <scope>GENOME REANNOTATION</scope>
    <source>
        <strain>cv. Columbia</strain>
    </source>
</reference>
<reference key="3">
    <citation type="journal article" date="2004" name="Biochem. J.">
        <title>Plant sterol biosynthesis: identification of two distinct families of sterol 4alpha-methyl oxidases.</title>
        <authorList>
            <person name="Darnet S."/>
            <person name="Rahier A."/>
        </authorList>
    </citation>
    <scope>NUCLEOTIDE SEQUENCE [MRNA] OF 1-273</scope>
    <scope>GENE FAMILY</scope>
    <scope>NOMENCLATURE</scope>
</reference>
<reference key="4">
    <citation type="journal article" date="2018" name="New Phytol.">
        <title>Arabidopsis ACYL-COA-BINDING PROTEIN1 interacts with STEROL C4-METHYL OXIDASE1-2 to modulate gene expression of homeodomain-leucine zipper IV transcription factors.</title>
        <authorList>
            <person name="Lung S.-C."/>
            <person name="Liao P."/>
            <person name="Yeung E.C."/>
            <person name="Hsiao A.-S."/>
            <person name="Xue Y."/>
            <person name="Chye M.-L."/>
        </authorList>
    </citation>
    <scope>INTERACTION WITH ACBP1</scope>
    <source>
        <strain>cv. Columbia</strain>
    </source>
</reference>
<reference key="5">
    <citation type="journal article" date="2019" name="Plant Physiol.">
        <title>The SMO1 family of sterol 4alpha-methyl oxidases is essential for auxin- and cytokinin-regulated embryogenesis.</title>
        <authorList>
            <person name="Song J."/>
            <person name="Sun S."/>
            <person name="Ren H."/>
            <person name="Grison M."/>
            <person name="Boutte Y."/>
            <person name="Bai W."/>
            <person name="Men S."/>
        </authorList>
    </citation>
    <scope>FUNCTION</scope>
    <scope>DISRUPTION PHENOTYPE</scope>
    <scope>SUBCELLULAR LOCATION</scope>
    <scope>TISSUE SPECIFICITY</scope>
    <scope>DEVELOPMENTAL STAGE</scope>
    <source>
        <strain>cv. Columbia</strain>
        <strain>cv. Landsberg erecta</strain>
        <strain>cv. Wassilewskija</strain>
    </source>
</reference>
<comment type="function">
    <text evidence="2">Non-heme iron oxygenase involved in sterols biosynthesis by catalyzing the removal of the first methyl group at the C-4 position (By similarity). 4,4-dimethyl-9-beta,19-cyclopropylsterols such as 24-methylenecycloartanol are the preferred substrates (By similarity).</text>
</comment>
<comment type="catalytic activity">
    <reaction evidence="2">
        <text>4,4-dimethyl-5alpha-cholest-7-en-3beta-ol + 6 Fe(II)-[cytochrome b5] + 3 O2 + 5 H(+) = 4alpha-carboxy-4beta-methyl-5alpha-cholest-7-ene-3beta-ol + 6 Fe(III)-[cytochrome b5] + 4 H2O</text>
        <dbReference type="Rhea" id="RHEA:55220"/>
        <dbReference type="Rhea" id="RHEA-COMP:10438"/>
        <dbReference type="Rhea" id="RHEA-COMP:10439"/>
        <dbReference type="ChEBI" id="CHEBI:15377"/>
        <dbReference type="ChEBI" id="CHEBI:15378"/>
        <dbReference type="ChEBI" id="CHEBI:15379"/>
        <dbReference type="ChEBI" id="CHEBI:16455"/>
        <dbReference type="ChEBI" id="CHEBI:29033"/>
        <dbReference type="ChEBI" id="CHEBI:29034"/>
        <dbReference type="ChEBI" id="CHEBI:58387"/>
        <dbReference type="EC" id="1.14.18.9"/>
    </reaction>
</comment>
<comment type="catalytic activity">
    <reaction evidence="2">
        <text>24-methylidenelophenol + 6 Fe(II)-[cytochrome b5] + 3 O2 + 5 H(+) = 4alpha-carboxy-ergosta-7,24(24(1))-dien-3beta-ol + 6 Fe(III)-[cytochrome b5] + 4 H2O</text>
        <dbReference type="Rhea" id="RHEA:58868"/>
        <dbReference type="Rhea" id="RHEA-COMP:10438"/>
        <dbReference type="Rhea" id="RHEA-COMP:10439"/>
        <dbReference type="ChEBI" id="CHEBI:15377"/>
        <dbReference type="ChEBI" id="CHEBI:15378"/>
        <dbReference type="ChEBI" id="CHEBI:15379"/>
        <dbReference type="ChEBI" id="CHEBI:29033"/>
        <dbReference type="ChEBI" id="CHEBI:29034"/>
        <dbReference type="ChEBI" id="CHEBI:29107"/>
        <dbReference type="ChEBI" id="CHEBI:142850"/>
        <dbReference type="EC" id="1.14.18.11"/>
    </reaction>
</comment>
<comment type="cofactor">
    <cofactor evidence="1">
        <name>Fe cation</name>
        <dbReference type="ChEBI" id="CHEBI:24875"/>
    </cofactor>
</comment>
<comment type="subunit">
    <text evidence="4">Interacts with ACBP1.</text>
</comment>
<comment type="subcellular location">
    <subcellularLocation>
        <location evidence="5">Endoplasmic reticulum membrane</location>
        <topology evidence="3">Multi-pass membrane protein</topology>
    </subcellularLocation>
</comment>
<comment type="tissue specificity">
    <text evidence="5">Expressed at low levels in leaves, roots, siliques and flowers.</text>
</comment>
<comment type="developmental stage">
    <text evidence="5">In vegetative organs, confined to vascular tissues of leaves and roots (PubMed:31341004). In flowers, detected in petal vascular tissues, anther filaments and styles (PubMed:31341004). In siliques, present in funiculi (PubMed:31341004). During embryogenesis, expressed from the globular stage to the mature stage in the embryo but not in the endosperm (PubMed:31341004).</text>
</comment>
<comment type="domain">
    <text evidence="1">The histidine box domains may contain the active site and/or be involved in metal ion binding.</text>
</comment>
<comment type="disruption phenotype">
    <text evidence="5">The double mutant smo1-1 smo1-3 shows no obvious phenotype.</text>
</comment>
<comment type="miscellaneous">
    <text evidence="7">Requires a membrane-bound cytochrome b5 as an obligatory electron carrier from NAD(P)H to SMO.</text>
</comment>
<comment type="similarity">
    <text evidence="7">Belongs to the sterol desaturase family.</text>
</comment>
<sequence>MIPYPTVEDASVALGRNLTWFETVWFDYSATKSNFHVYCHTILVLFLVFSLAPFPLVIVEWTGWFDQFKIQKKVKYSLSDMFQCYKEVMKLFLLVVGTLQIVSYPSIQMVGIRSGLPLPSLMEIVAQLVVYFLIEDYTNYWIHRWMHCKWGYEKIHRIHHEYTSPIGYASPYAHWAEILILGIPTFLGPAIAPGHIMTFWLWISLRQFEAIETHSGYDFPWSVTKLIPFYGGPEYHDYHHYVGGQSQSNFASVFTYCDYIYGTDKGYRIHKKLLHHQIKEEAEEKRVRKHD</sequence>
<keyword id="KW-0256">Endoplasmic reticulum</keyword>
<keyword id="KW-0408">Iron</keyword>
<keyword id="KW-0444">Lipid biosynthesis</keyword>
<keyword id="KW-0443">Lipid metabolism</keyword>
<keyword id="KW-0472">Membrane</keyword>
<keyword id="KW-0503">Monooxygenase</keyword>
<keyword id="KW-0560">Oxidoreductase</keyword>
<keyword id="KW-1185">Reference proteome</keyword>
<keyword id="KW-0752">Steroid biosynthesis</keyword>
<keyword id="KW-0753">Steroid metabolism</keyword>
<keyword id="KW-0756">Sterol biosynthesis</keyword>
<keyword id="KW-1207">Sterol metabolism</keyword>
<keyword id="KW-0812">Transmembrane</keyword>
<keyword id="KW-1133">Transmembrane helix</keyword>
<feature type="chain" id="PRO_0000413163" description="Methylsterol monooxygenase 1-3">
    <location>
        <begin position="1"/>
        <end position="291"/>
    </location>
</feature>
<feature type="transmembrane region" description="Helical" evidence="3">
    <location>
        <begin position="41"/>
        <end position="61"/>
    </location>
</feature>
<feature type="transmembrane region" description="Helical" evidence="3">
    <location>
        <begin position="92"/>
        <end position="112"/>
    </location>
</feature>
<feature type="transmembrane region" description="Helical" evidence="3">
    <location>
        <begin position="114"/>
        <end position="134"/>
    </location>
</feature>
<feature type="transmembrane region" description="Helical" evidence="3">
    <location>
        <begin position="178"/>
        <end position="198"/>
    </location>
</feature>
<feature type="domain" description="Fatty acid hydroxylase" evidence="3">
    <location>
        <begin position="128"/>
        <end position="263"/>
    </location>
</feature>
<feature type="short sequence motif" description="Histidine box-1" evidence="1">
    <location>
        <begin position="143"/>
        <end position="147"/>
    </location>
</feature>
<feature type="short sequence motif" description="Histidine box-2" evidence="1">
    <location>
        <begin position="156"/>
        <end position="160"/>
    </location>
</feature>
<feature type="short sequence motif" description="Histidine box-3" evidence="1">
    <location>
        <begin position="235"/>
        <end position="241"/>
    </location>
</feature>
<feature type="sequence conflict" description="In Ref. 3; AAQ94118." evidence="7" ref="3">
    <original>I</original>
    <variation>IS</variation>
    <location>
        <position position="260"/>
    </location>
</feature>
<accession>F4JLZ6</accession>
<accession>F4JLZ3</accession>
<accession>Q5J909</accession>
<name>SMO13_ARATH</name>
<evidence type="ECO:0000250" key="1">
    <source>
        <dbReference type="UniProtKB" id="P53045"/>
    </source>
</evidence>
<evidence type="ECO:0000250" key="2">
    <source>
        <dbReference type="UniProtKB" id="Q8L7W5"/>
    </source>
</evidence>
<evidence type="ECO:0000255" key="3"/>
<evidence type="ECO:0000269" key="4">
    <source>
    </source>
</evidence>
<evidence type="ECO:0000269" key="5">
    <source>
    </source>
</evidence>
<evidence type="ECO:0000303" key="6">
    <source>
    </source>
</evidence>
<evidence type="ECO:0000305" key="7"/>
<evidence type="ECO:0000312" key="8">
    <source>
        <dbReference type="Araport" id="AT4G22755"/>
    </source>
</evidence>
<evidence type="ECO:0000312" key="9">
    <source>
        <dbReference type="EMBL" id="AL021635"/>
    </source>
</evidence>